<protein>
    <recommendedName>
        <fullName>U3 small nucleolar ribonucleoprotein protein IMP4</fullName>
        <shortName>U3 snoRNP protein IMP4</shortName>
    </recommendedName>
    <alternativeName>
        <fullName>Interacting with MPP10 protein 4</fullName>
    </alternativeName>
</protein>
<dbReference type="EMBL" id="X86470">
    <property type="protein sequence ID" value="CAA60184.1"/>
    <property type="molecule type" value="Genomic_DNA"/>
</dbReference>
<dbReference type="EMBL" id="Z71351">
    <property type="protein sequence ID" value="CAA95949.1"/>
    <property type="molecule type" value="Genomic_DNA"/>
</dbReference>
<dbReference type="EMBL" id="BK006947">
    <property type="protein sequence ID" value="DAA10470.1"/>
    <property type="molecule type" value="Genomic_DNA"/>
</dbReference>
<dbReference type="PIR" id="S53904">
    <property type="entry name" value="S53904"/>
</dbReference>
<dbReference type="RefSeq" id="NP_014324.3">
    <property type="nucleotide sequence ID" value="NM_001182913.3"/>
</dbReference>
<dbReference type="PDB" id="5WLC">
    <property type="method" value="EM"/>
    <property type="resolution" value="3.80 A"/>
    <property type="chains" value="SM=1-290"/>
</dbReference>
<dbReference type="PDB" id="5WYJ">
    <property type="method" value="EM"/>
    <property type="resolution" value="8.70 A"/>
    <property type="chains" value="MB=1-290"/>
</dbReference>
<dbReference type="PDB" id="5WYK">
    <property type="method" value="EM"/>
    <property type="resolution" value="4.50 A"/>
    <property type="chains" value="MB=1-290"/>
</dbReference>
<dbReference type="PDB" id="6KE6">
    <property type="method" value="EM"/>
    <property type="resolution" value="3.40 A"/>
    <property type="chains" value="5G=1-290"/>
</dbReference>
<dbReference type="PDB" id="6LQP">
    <property type="method" value="EM"/>
    <property type="resolution" value="3.20 A"/>
    <property type="chains" value="5G=1-290"/>
</dbReference>
<dbReference type="PDB" id="6LQQ">
    <property type="method" value="EM"/>
    <property type="resolution" value="4.10 A"/>
    <property type="chains" value="5G=1-290"/>
</dbReference>
<dbReference type="PDB" id="6LQR">
    <property type="method" value="EM"/>
    <property type="resolution" value="8.60 A"/>
    <property type="chains" value="5G=1-290"/>
</dbReference>
<dbReference type="PDB" id="6LQS">
    <property type="method" value="EM"/>
    <property type="resolution" value="3.80 A"/>
    <property type="chains" value="5G=1-290"/>
</dbReference>
<dbReference type="PDB" id="6LQT">
    <property type="method" value="EM"/>
    <property type="resolution" value="4.90 A"/>
    <property type="chains" value="5G=1-290"/>
</dbReference>
<dbReference type="PDB" id="6LQU">
    <property type="method" value="EM"/>
    <property type="resolution" value="3.70 A"/>
    <property type="chains" value="5G=1-290"/>
</dbReference>
<dbReference type="PDB" id="6LQV">
    <property type="method" value="EM"/>
    <property type="resolution" value="4.80 A"/>
    <property type="chains" value="5G=1-290"/>
</dbReference>
<dbReference type="PDB" id="6ZQA">
    <property type="method" value="EM"/>
    <property type="resolution" value="4.40 A"/>
    <property type="chains" value="CJ=1-290"/>
</dbReference>
<dbReference type="PDB" id="6ZQB">
    <property type="method" value="EM"/>
    <property type="resolution" value="3.90 A"/>
    <property type="chains" value="CJ=1-290"/>
</dbReference>
<dbReference type="PDB" id="6ZQC">
    <property type="method" value="EM"/>
    <property type="resolution" value="3.80 A"/>
    <property type="chains" value="CJ=1-290"/>
</dbReference>
<dbReference type="PDB" id="6ZQD">
    <property type="method" value="EM"/>
    <property type="resolution" value="3.80 A"/>
    <property type="chains" value="CJ=1-290"/>
</dbReference>
<dbReference type="PDB" id="6ZQE">
    <property type="method" value="EM"/>
    <property type="resolution" value="7.10 A"/>
    <property type="chains" value="CJ=1-290"/>
</dbReference>
<dbReference type="PDB" id="6ZQF">
    <property type="method" value="EM"/>
    <property type="resolution" value="4.90 A"/>
    <property type="chains" value="CJ=1-290"/>
</dbReference>
<dbReference type="PDB" id="6ZQG">
    <property type="method" value="EM"/>
    <property type="resolution" value="3.50 A"/>
    <property type="chains" value="CJ=1-290"/>
</dbReference>
<dbReference type="PDB" id="7AJT">
    <property type="method" value="EM"/>
    <property type="resolution" value="4.60 A"/>
    <property type="chains" value="CJ=1-290"/>
</dbReference>
<dbReference type="PDB" id="7AJU">
    <property type="method" value="EM"/>
    <property type="resolution" value="3.80 A"/>
    <property type="chains" value="CJ=1-290"/>
</dbReference>
<dbReference type="PDB" id="7D4I">
    <property type="method" value="EM"/>
    <property type="resolution" value="4.00 A"/>
    <property type="chains" value="5G=1-290"/>
</dbReference>
<dbReference type="PDB" id="7D5S">
    <property type="method" value="EM"/>
    <property type="resolution" value="4.60 A"/>
    <property type="chains" value="5G=1-290"/>
</dbReference>
<dbReference type="PDB" id="7D5T">
    <property type="method" value="EM"/>
    <property type="resolution" value="6.00 A"/>
    <property type="chains" value="5G=1-290"/>
</dbReference>
<dbReference type="PDB" id="7D63">
    <property type="method" value="EM"/>
    <property type="resolution" value="12.30 A"/>
    <property type="chains" value="5G=1-290"/>
</dbReference>
<dbReference type="PDB" id="7SUK">
    <property type="method" value="EM"/>
    <property type="resolution" value="3.99 A"/>
    <property type="chains" value="SM=1-290"/>
</dbReference>
<dbReference type="PDBsum" id="5WLC"/>
<dbReference type="PDBsum" id="5WYJ"/>
<dbReference type="PDBsum" id="5WYK"/>
<dbReference type="PDBsum" id="6KE6"/>
<dbReference type="PDBsum" id="6LQP"/>
<dbReference type="PDBsum" id="6LQQ"/>
<dbReference type="PDBsum" id="6LQR"/>
<dbReference type="PDBsum" id="6LQS"/>
<dbReference type="PDBsum" id="6LQT"/>
<dbReference type="PDBsum" id="6LQU"/>
<dbReference type="PDBsum" id="6LQV"/>
<dbReference type="PDBsum" id="6ZQA"/>
<dbReference type="PDBsum" id="6ZQB"/>
<dbReference type="PDBsum" id="6ZQC"/>
<dbReference type="PDBsum" id="6ZQD"/>
<dbReference type="PDBsum" id="6ZQE"/>
<dbReference type="PDBsum" id="6ZQF"/>
<dbReference type="PDBsum" id="6ZQG"/>
<dbReference type="PDBsum" id="7AJT"/>
<dbReference type="PDBsum" id="7AJU"/>
<dbReference type="PDBsum" id="7D4I"/>
<dbReference type="PDBsum" id="7D5S"/>
<dbReference type="PDBsum" id="7D5T"/>
<dbReference type="PDBsum" id="7D63"/>
<dbReference type="PDBsum" id="7SUK"/>
<dbReference type="EMDB" id="EMD-0949"/>
<dbReference type="EMDB" id="EMD-0950"/>
<dbReference type="EMDB" id="EMD-0951"/>
<dbReference type="EMDB" id="EMD-0952"/>
<dbReference type="EMDB" id="EMD-0953"/>
<dbReference type="EMDB" id="EMD-0954"/>
<dbReference type="EMDB" id="EMD-0955"/>
<dbReference type="EMDB" id="EMD-11357"/>
<dbReference type="EMDB" id="EMD-11358"/>
<dbReference type="EMDB" id="EMD-11359"/>
<dbReference type="EMDB" id="EMD-11360"/>
<dbReference type="EMDB" id="EMD-11361"/>
<dbReference type="EMDB" id="EMD-11362"/>
<dbReference type="EMDB" id="EMD-11363"/>
<dbReference type="EMDB" id="EMD-11807"/>
<dbReference type="EMDB" id="EMD-11808"/>
<dbReference type="EMDB" id="EMD-25441"/>
<dbReference type="EMDB" id="EMD-30574"/>
<dbReference type="EMDB" id="EMD-30584"/>
<dbReference type="EMDB" id="EMD-30585"/>
<dbReference type="EMDB" id="EMD-30588"/>
<dbReference type="EMDB" id="EMD-6695"/>
<dbReference type="EMDB" id="EMD-6696"/>
<dbReference type="EMDB" id="EMD-8859"/>
<dbReference type="EMDB" id="EMD-9964"/>
<dbReference type="SMR" id="P53941"/>
<dbReference type="BioGRID" id="35748">
    <property type="interactions" value="136"/>
</dbReference>
<dbReference type="ComplexPortal" id="CPX-1893">
    <property type="entry name" value="MPP10 complex"/>
</dbReference>
<dbReference type="DIP" id="DIP-4362N"/>
<dbReference type="FunCoup" id="P53941">
    <property type="interactions" value="1091"/>
</dbReference>
<dbReference type="IntAct" id="P53941">
    <property type="interactions" value="87"/>
</dbReference>
<dbReference type="MINT" id="P53941"/>
<dbReference type="STRING" id="4932.YNL075W"/>
<dbReference type="iPTMnet" id="P53941"/>
<dbReference type="PaxDb" id="4932-YNL075W"/>
<dbReference type="PeptideAtlas" id="P53941"/>
<dbReference type="EnsemblFungi" id="YNL075W_mRNA">
    <property type="protein sequence ID" value="YNL075W"/>
    <property type="gene ID" value="YNL075W"/>
</dbReference>
<dbReference type="GeneID" id="855649"/>
<dbReference type="KEGG" id="sce:YNL075W"/>
<dbReference type="AGR" id="SGD:S000005019"/>
<dbReference type="SGD" id="S000005019">
    <property type="gene designation" value="IMP4"/>
</dbReference>
<dbReference type="VEuPathDB" id="FungiDB:YNL075W"/>
<dbReference type="eggNOG" id="KOG2781">
    <property type="taxonomic scope" value="Eukaryota"/>
</dbReference>
<dbReference type="GeneTree" id="ENSGT00940000153231"/>
<dbReference type="HOGENOM" id="CLU_040063_2_0_1"/>
<dbReference type="InParanoid" id="P53941"/>
<dbReference type="OMA" id="IGTMSEQ"/>
<dbReference type="OrthoDB" id="10253204at2759"/>
<dbReference type="BioCyc" id="YEAST:G3O-33104-MONOMER"/>
<dbReference type="Reactome" id="R-SCE-6791226">
    <property type="pathway name" value="Major pathway of rRNA processing in the nucleolus and cytosol"/>
</dbReference>
<dbReference type="BioGRID-ORCS" id="855649">
    <property type="hits" value="7 hits in 10 CRISPR screens"/>
</dbReference>
<dbReference type="CD-CODE" id="E03F929F">
    <property type="entry name" value="Stress granule"/>
</dbReference>
<dbReference type="PRO" id="PR:P53941"/>
<dbReference type="Proteomes" id="UP000002311">
    <property type="component" value="Chromosome XIV"/>
</dbReference>
<dbReference type="RNAct" id="P53941">
    <property type="molecule type" value="protein"/>
</dbReference>
<dbReference type="GO" id="GO:0030686">
    <property type="term" value="C:90S preribosome"/>
    <property type="evidence" value="ECO:0007005"/>
    <property type="project" value="SGD"/>
</dbReference>
<dbReference type="GO" id="GO:0034457">
    <property type="term" value="C:Mpp10 complex"/>
    <property type="evidence" value="ECO:0000314"/>
    <property type="project" value="SGD"/>
</dbReference>
<dbReference type="GO" id="GO:0005730">
    <property type="term" value="C:nucleolus"/>
    <property type="evidence" value="ECO:0000314"/>
    <property type="project" value="ComplexPortal"/>
</dbReference>
<dbReference type="GO" id="GO:0005654">
    <property type="term" value="C:nucleoplasm"/>
    <property type="evidence" value="ECO:0000304"/>
    <property type="project" value="Reactome"/>
</dbReference>
<dbReference type="GO" id="GO:0032040">
    <property type="term" value="C:small-subunit processome"/>
    <property type="evidence" value="ECO:0000314"/>
    <property type="project" value="SGD"/>
</dbReference>
<dbReference type="GO" id="GO:0140691">
    <property type="term" value="F:RNA folding chaperone"/>
    <property type="evidence" value="ECO:0000314"/>
    <property type="project" value="SGD"/>
</dbReference>
<dbReference type="GO" id="GO:0042134">
    <property type="term" value="F:rRNA primary transcript binding"/>
    <property type="evidence" value="ECO:0000314"/>
    <property type="project" value="SGD"/>
</dbReference>
<dbReference type="GO" id="GO:0043047">
    <property type="term" value="F:single-stranded telomeric DNA binding"/>
    <property type="evidence" value="ECO:0000314"/>
    <property type="project" value="SGD"/>
</dbReference>
<dbReference type="GO" id="GO:0030515">
    <property type="term" value="F:snoRNA binding"/>
    <property type="evidence" value="ECO:0000314"/>
    <property type="project" value="SGD"/>
</dbReference>
<dbReference type="GO" id="GO:0030490">
    <property type="term" value="P:maturation of SSU-rRNA"/>
    <property type="evidence" value="ECO:0000303"/>
    <property type="project" value="ComplexPortal"/>
</dbReference>
<dbReference type="GO" id="GO:0042274">
    <property type="term" value="P:ribosomal small subunit biogenesis"/>
    <property type="evidence" value="ECO:0000314"/>
    <property type="project" value="SGD"/>
</dbReference>
<dbReference type="GO" id="GO:0006364">
    <property type="term" value="P:rRNA processing"/>
    <property type="evidence" value="ECO:0000314"/>
    <property type="project" value="SGD"/>
</dbReference>
<dbReference type="FunFam" id="3.40.50.10480:FF:000001">
    <property type="entry name" value="IMP4, U3 small nucleolar ribonucleoprotein"/>
    <property type="match status" value="1"/>
</dbReference>
<dbReference type="Gene3D" id="3.40.50.10480">
    <property type="entry name" value="Probable brix-domain ribosomal biogenesis protein"/>
    <property type="match status" value="1"/>
</dbReference>
<dbReference type="InterPro" id="IPR007109">
    <property type="entry name" value="Brix"/>
</dbReference>
<dbReference type="InterPro" id="IPR044281">
    <property type="entry name" value="IMP4/RPF1"/>
</dbReference>
<dbReference type="PANTHER" id="PTHR22734">
    <property type="entry name" value="U3 SMALL NUCLEOLAR RIBONUCLEOPROTEIN PROTEIN IMP4"/>
    <property type="match status" value="1"/>
</dbReference>
<dbReference type="PANTHER" id="PTHR22734:SF2">
    <property type="entry name" value="U3 SMALL NUCLEOLAR RIBONUCLEOPROTEIN PROTEIN IMP4"/>
    <property type="match status" value="1"/>
</dbReference>
<dbReference type="Pfam" id="PF04427">
    <property type="entry name" value="Brix"/>
    <property type="match status" value="1"/>
</dbReference>
<dbReference type="SMART" id="SM00879">
    <property type="entry name" value="Brix"/>
    <property type="match status" value="1"/>
</dbReference>
<dbReference type="SUPFAM" id="SSF52954">
    <property type="entry name" value="Class II aaRS ABD-related"/>
    <property type="match status" value="1"/>
</dbReference>
<dbReference type="PROSITE" id="PS50833">
    <property type="entry name" value="BRIX"/>
    <property type="match status" value="1"/>
</dbReference>
<comment type="function">
    <text evidence="2 4">Required for the early cleavages at sites A0, A1 and A2 during 18S ribosomal pre-RNA processing.</text>
</comment>
<comment type="subunit">
    <text evidence="3 4">Component of a heterotrimeric complex containing IMP3, IMP4 and MPP10. Interacts with MPP10. Component of the ribosomal small subunit (SSU) processome composed of at least 40 protein subunits and snoRNA U3.</text>
</comment>
<comment type="interaction">
    <interactant intactId="EBI-9243">
        <id>P53941</id>
    </interactant>
    <interactant intactId="EBI-5844">
        <id>P36009</id>
        <label>DHR2</label>
    </interactant>
    <organismsDiffer>false</organismsDiffer>
    <experiments>2</experiments>
</comment>
<comment type="interaction">
    <interactant intactId="EBI-9243">
        <id>P53941</id>
    </interactant>
    <interactant intactId="EBI-6482">
        <id>P38333</id>
        <label>ENP1</label>
    </interactant>
    <organismsDiffer>false</organismsDiffer>
    <experiments>7</experiments>
</comment>
<comment type="interaction">
    <interactant intactId="EBI-9243">
        <id>P53941</id>
    </interactant>
    <interactant intactId="EBI-11168">
        <id>P47083</id>
        <label>MPP10</label>
    </interactant>
    <organismsDiffer>false</organismsDiffer>
    <experiments>8</experiments>
</comment>
<comment type="subcellular location">
    <subcellularLocation>
        <location evidence="2">Nucleus</location>
        <location evidence="2">Nucleolus</location>
    </subcellularLocation>
</comment>
<keyword id="KW-0002">3D-structure</keyword>
<keyword id="KW-0539">Nucleus</keyword>
<keyword id="KW-1185">Reference proteome</keyword>
<keyword id="KW-0687">Ribonucleoprotein</keyword>
<keyword id="KW-0690">Ribosome biogenesis</keyword>
<keyword id="KW-0698">rRNA processing</keyword>
<feature type="chain" id="PRO_0000120245" description="U3 small nucleolar ribonucleoprotein protein IMP4">
    <location>
        <begin position="1"/>
        <end position="290"/>
    </location>
</feature>
<feature type="domain" description="Brix" evidence="1">
    <location>
        <begin position="86"/>
        <end position="267"/>
    </location>
</feature>
<feature type="mutagenesis site" description="No effect on RNA binding." evidence="4">
    <original>R</original>
    <variation>A</variation>
    <location>
        <position position="119"/>
    </location>
</feature>
<feature type="mutagenesis site" description="No effect on RNA binding." evidence="4">
    <original>R</original>
    <variation>A</variation>
    <location>
        <position position="201"/>
    </location>
</feature>
<feature type="mutagenesis site" description="Loss of RNA binding." evidence="4">
    <original>R</original>
    <variation>A</variation>
    <location>
        <position position="220"/>
    </location>
</feature>
<feature type="mutagenesis site" description="Loss of RNA binding." evidence="4">
    <original>R</original>
    <variation>A</variation>
    <location>
        <position position="253"/>
    </location>
</feature>
<reference key="1">
    <citation type="journal article" date="1996" name="Yeast">
        <title>Sequencing a cosmid clone of Saccharomyces cerevisiae chromosome XIV reveals 12 new open reading frames (ORFs) and an ancient duplication of six ORFs.</title>
        <authorList>
            <person name="Poehlmann R."/>
            <person name="Philippsen P."/>
        </authorList>
    </citation>
    <scope>NUCLEOTIDE SEQUENCE [GENOMIC DNA]</scope>
    <source>
        <strain>ATCC 96604 / S288c / FY1679</strain>
    </source>
</reference>
<reference key="2">
    <citation type="journal article" date="1997" name="Nature">
        <title>The nucleotide sequence of Saccharomyces cerevisiae chromosome XIV and its evolutionary implications.</title>
        <authorList>
            <person name="Philippsen P."/>
            <person name="Kleine K."/>
            <person name="Poehlmann R."/>
            <person name="Duesterhoeft A."/>
            <person name="Hamberg K."/>
            <person name="Hegemann J.H."/>
            <person name="Obermaier B."/>
            <person name="Urrestarazu L.A."/>
            <person name="Aert R."/>
            <person name="Albermann K."/>
            <person name="Altmann R."/>
            <person name="Andre B."/>
            <person name="Baladron V."/>
            <person name="Ballesta J.P.G."/>
            <person name="Becam A.-M."/>
            <person name="Beinhauer J.D."/>
            <person name="Boskovic J."/>
            <person name="Buitrago M.J."/>
            <person name="Bussereau F."/>
            <person name="Coster F."/>
            <person name="Crouzet M."/>
            <person name="D'Angelo M."/>
            <person name="Dal Pero F."/>
            <person name="De Antoni A."/>
            <person name="del Rey F."/>
            <person name="Doignon F."/>
            <person name="Domdey H."/>
            <person name="Dubois E."/>
            <person name="Fiedler T.A."/>
            <person name="Fleig U."/>
            <person name="Floeth M."/>
            <person name="Fritz C."/>
            <person name="Gaillardin C."/>
            <person name="Garcia-Cantalejo J.M."/>
            <person name="Glansdorff N."/>
            <person name="Goffeau A."/>
            <person name="Gueldener U."/>
            <person name="Herbert C.J."/>
            <person name="Heumann K."/>
            <person name="Heuss-Neitzel D."/>
            <person name="Hilbert H."/>
            <person name="Hinni K."/>
            <person name="Iraqui Houssaini I."/>
            <person name="Jacquet M."/>
            <person name="Jimenez A."/>
            <person name="Jonniaux J.-L."/>
            <person name="Karpfinger-Hartl L."/>
            <person name="Lanfranchi G."/>
            <person name="Lepingle A."/>
            <person name="Levesque H."/>
            <person name="Lyck R."/>
            <person name="Maftahi M."/>
            <person name="Mallet L."/>
            <person name="Maurer C.T.C."/>
            <person name="Messenguy F."/>
            <person name="Mewes H.-W."/>
            <person name="Moestl D."/>
            <person name="Nasr F."/>
            <person name="Nicaud J.-M."/>
            <person name="Niedenthal R.K."/>
            <person name="Pandolfo D."/>
            <person name="Pierard A."/>
            <person name="Piravandi E."/>
            <person name="Planta R.J."/>
            <person name="Pohl T.M."/>
            <person name="Purnelle B."/>
            <person name="Rebischung C."/>
            <person name="Remacha M.A."/>
            <person name="Revuelta J.L."/>
            <person name="Rinke M."/>
            <person name="Saiz J.E."/>
            <person name="Sartorello F."/>
            <person name="Scherens B."/>
            <person name="Sen-Gupta M."/>
            <person name="Soler-Mira A."/>
            <person name="Urbanus J.H.M."/>
            <person name="Valle G."/>
            <person name="Van Dyck L."/>
            <person name="Verhasselt P."/>
            <person name="Vierendeels F."/>
            <person name="Vissers S."/>
            <person name="Voet M."/>
            <person name="Volckaert G."/>
            <person name="Wach A."/>
            <person name="Wambutt R."/>
            <person name="Wedler H."/>
            <person name="Zollner A."/>
            <person name="Hani J."/>
        </authorList>
    </citation>
    <scope>NUCLEOTIDE SEQUENCE [LARGE SCALE GENOMIC DNA]</scope>
    <source>
        <strain>ATCC 204508 / S288c</strain>
    </source>
</reference>
<reference key="3">
    <citation type="journal article" date="2014" name="G3 (Bethesda)">
        <title>The reference genome sequence of Saccharomyces cerevisiae: Then and now.</title>
        <authorList>
            <person name="Engel S.R."/>
            <person name="Dietrich F.S."/>
            <person name="Fisk D.G."/>
            <person name="Binkley G."/>
            <person name="Balakrishnan R."/>
            <person name="Costanzo M.C."/>
            <person name="Dwight S.S."/>
            <person name="Hitz B.C."/>
            <person name="Karra K."/>
            <person name="Nash R.S."/>
            <person name="Weng S."/>
            <person name="Wong E.D."/>
            <person name="Lloyd P."/>
            <person name="Skrzypek M.S."/>
            <person name="Miyasato S.R."/>
            <person name="Simison M."/>
            <person name="Cherry J.M."/>
        </authorList>
    </citation>
    <scope>GENOME REANNOTATION</scope>
    <source>
        <strain>ATCC 204508 / S288c</strain>
    </source>
</reference>
<reference key="4">
    <citation type="journal article" date="1999" name="Mol. Cell. Biol.">
        <title>Imp3p and Imp4p, two specific components of the U3 small nucleolar ribonucleoprotein that are essential for pre-18S rRNA processing.</title>
        <authorList>
            <person name="Lee S.J."/>
            <person name="Baserga S.J."/>
        </authorList>
    </citation>
    <scope>FUNCTION</scope>
    <scope>SUBCELLULAR LOCATION</scope>
</reference>
<reference key="5">
    <citation type="journal article" date="2002" name="Nature">
        <title>A large nucleolar U3 ribonucleoprotein required for 18S ribosomal RNA biogenesis.</title>
        <authorList>
            <person name="Dragon F."/>
            <person name="Gallagher J.E.G."/>
            <person name="Compagnone-Post P.A."/>
            <person name="Mitchell B.M."/>
            <person name="Porwancher K.A."/>
            <person name="Wehner K.A."/>
            <person name="Wormsley S."/>
            <person name="Settlage R.E."/>
            <person name="Shabanowitz J."/>
            <person name="Osheim Y."/>
            <person name="Beyer A.L."/>
            <person name="Hunt D.F."/>
            <person name="Baserga S.J."/>
        </authorList>
    </citation>
    <scope>IDENTIFICATION IN SSU PROCESSOME BY MASS SPECTROMETRY</scope>
</reference>
<reference key="6">
    <citation type="journal article" date="2004" name="Proc. Natl. Acad. Sci. U.S.A.">
        <title>Imp3p and Imp4p mediate formation of essential U3-precursor rRNA (pre-rRNA) duplexes, possibly to recruit the small subunit processome to the pre-rRNA.</title>
        <authorList>
            <person name="Gerczei T."/>
            <person name="Correll C.C."/>
        </authorList>
    </citation>
    <scope>FUNCTION</scope>
    <scope>INTERACTION WITH MPP10</scope>
    <scope>MUTAGENESIS OF ARG-119; ARG-201; ARG-220 AND ARG-253</scope>
</reference>
<organism>
    <name type="scientific">Saccharomyces cerevisiae (strain ATCC 204508 / S288c)</name>
    <name type="common">Baker's yeast</name>
    <dbReference type="NCBI Taxonomy" id="559292"/>
    <lineage>
        <taxon>Eukaryota</taxon>
        <taxon>Fungi</taxon>
        <taxon>Dikarya</taxon>
        <taxon>Ascomycota</taxon>
        <taxon>Saccharomycotina</taxon>
        <taxon>Saccharomycetes</taxon>
        <taxon>Saccharomycetales</taxon>
        <taxon>Saccharomycetaceae</taxon>
        <taxon>Saccharomyces</taxon>
    </lineage>
</organism>
<proteinExistence type="evidence at protein level"/>
<sequence>MLRRQARERREYLYRKAQELQDSQLQQKRQIIKQALAQGKPLPKELAEDESLQKDFRYDQSLKESEEADDLQVDDEYAATSGIMDPRIIVTTSRDPSTRLSQFAKEIKLLFPNAVRLNRGNYVMPNLVDACKKSGTTDLVVLHEHRGVPTSLTISHFPHGPTAQFSLHNVVMRHDIINAGNQSEVNPHLIFDNFTTALGKRVVCILKHLFNAGPKKDSERVITFANRGDFISVRQHVYVRTREGVEIAEVGPRFEMRLFELRLGTLENKDADVEWQLRRFIRTANKKDYL</sequence>
<accession>P53941</accession>
<accession>D6W1A4</accession>
<name>IMP4_YEAST</name>
<gene>
    <name type="primary">IMP4</name>
    <name type="ordered locus">YNL075W</name>
    <name type="ORF">N2353</name>
</gene>
<evidence type="ECO:0000255" key="1">
    <source>
        <dbReference type="PROSITE-ProRule" id="PRU00034"/>
    </source>
</evidence>
<evidence type="ECO:0000269" key="2">
    <source>
    </source>
</evidence>
<evidence type="ECO:0000269" key="3">
    <source>
    </source>
</evidence>
<evidence type="ECO:0000269" key="4">
    <source>
    </source>
</evidence>